<keyword id="KW-0010">Activator</keyword>
<keyword id="KW-0238">DNA-binding</keyword>
<keyword id="KW-0539">Nucleus</keyword>
<keyword id="KW-1185">Reference proteome</keyword>
<keyword id="KW-0346">Stress response</keyword>
<keyword id="KW-0804">Transcription</keyword>
<keyword id="KW-0805">Transcription regulation</keyword>
<comment type="function">
    <text evidence="1">Probable transcriptional activator that binds to the DNA sequence 5'-[AG]CCGAC-3' of the cis-acting dehydration-responsive element (DRE).</text>
</comment>
<comment type="subcellular location">
    <subcellularLocation>
        <location evidence="2 4">Nucleus</location>
    </subcellularLocation>
</comment>
<comment type="induction">
    <text evidence="4">Not induced by high-salt and drought stresses.</text>
</comment>
<comment type="similarity">
    <text evidence="5">Belongs to the AP2/ERF transcription factor family. ERF subfamily.</text>
</comment>
<dbReference type="EMBL" id="AY339375">
    <property type="protein sequence ID" value="AAQ19033.1"/>
    <property type="molecule type" value="mRNA"/>
</dbReference>
<dbReference type="EMBL" id="AP004623">
    <property type="protein sequence ID" value="BAC56005.1"/>
    <property type="molecule type" value="Genomic_DNA"/>
</dbReference>
<dbReference type="EMBL" id="AP005411">
    <property type="protein sequence ID" value="BAD10326.1"/>
    <property type="molecule type" value="Genomic_DNA"/>
</dbReference>
<dbReference type="EMBL" id="AP008214">
    <property type="protein sequence ID" value="BAF24449.1"/>
    <property type="molecule type" value="Genomic_DNA"/>
</dbReference>
<dbReference type="EMBL" id="AP014964">
    <property type="protein sequence ID" value="BAT06749.1"/>
    <property type="molecule type" value="Genomic_DNA"/>
</dbReference>
<dbReference type="EMBL" id="AK108143">
    <property type="status" value="NOT_ANNOTATED_CDS"/>
    <property type="molecule type" value="mRNA"/>
</dbReference>
<dbReference type="FunCoup" id="Q84ZA1">
    <property type="interactions" value="180"/>
</dbReference>
<dbReference type="PaxDb" id="39947-Q84ZA1"/>
<dbReference type="EnsemblPlants" id="Os08t0565200-01">
    <property type="protein sequence ID" value="Os08t0565200-01"/>
    <property type="gene ID" value="Os08g0565200"/>
</dbReference>
<dbReference type="Gramene" id="Os08t0565200-01">
    <property type="protein sequence ID" value="Os08t0565200-01"/>
    <property type="gene ID" value="Os08g0565200"/>
</dbReference>
<dbReference type="KEGG" id="dosa:Os08g0565200"/>
<dbReference type="eggNOG" id="ENOG502S49Z">
    <property type="taxonomic scope" value="Eukaryota"/>
</dbReference>
<dbReference type="HOGENOM" id="CLU_112618_0_0_1"/>
<dbReference type="InParanoid" id="Q84ZA1"/>
<dbReference type="OMA" id="ICPADIM"/>
<dbReference type="Proteomes" id="UP000000763">
    <property type="component" value="Chromosome 8"/>
</dbReference>
<dbReference type="Proteomes" id="UP000059680">
    <property type="component" value="Chromosome 8"/>
</dbReference>
<dbReference type="GO" id="GO:0005634">
    <property type="term" value="C:nucleus"/>
    <property type="evidence" value="ECO:0000314"/>
    <property type="project" value="UniProtKB"/>
</dbReference>
<dbReference type="GO" id="GO:0003700">
    <property type="term" value="F:DNA-binding transcription factor activity"/>
    <property type="evidence" value="ECO:0000318"/>
    <property type="project" value="GO_Central"/>
</dbReference>
<dbReference type="GO" id="GO:0000976">
    <property type="term" value="F:transcription cis-regulatory region binding"/>
    <property type="evidence" value="ECO:0000318"/>
    <property type="project" value="GO_Central"/>
</dbReference>
<dbReference type="GO" id="GO:0045893">
    <property type="term" value="P:positive regulation of DNA-templated transcription"/>
    <property type="evidence" value="ECO:0000318"/>
    <property type="project" value="GO_Central"/>
</dbReference>
<dbReference type="GO" id="GO:0006950">
    <property type="term" value="P:response to stress"/>
    <property type="evidence" value="ECO:0000318"/>
    <property type="project" value="GO_Central"/>
</dbReference>
<dbReference type="CDD" id="cd00018">
    <property type="entry name" value="AP2"/>
    <property type="match status" value="1"/>
</dbReference>
<dbReference type="FunFam" id="3.30.730.10:FF:000001">
    <property type="entry name" value="Ethylene-responsive transcription factor 2"/>
    <property type="match status" value="1"/>
</dbReference>
<dbReference type="Gene3D" id="3.30.730.10">
    <property type="entry name" value="AP2/ERF domain"/>
    <property type="match status" value="1"/>
</dbReference>
<dbReference type="InterPro" id="IPR001471">
    <property type="entry name" value="AP2/ERF_dom"/>
</dbReference>
<dbReference type="InterPro" id="IPR036955">
    <property type="entry name" value="AP2/ERF_dom_sf"/>
</dbReference>
<dbReference type="InterPro" id="IPR016177">
    <property type="entry name" value="DNA-bd_dom_sf"/>
</dbReference>
<dbReference type="PANTHER" id="PTHR31241">
    <property type="entry name" value="DEHYDRATION-RESPONSIVE ELEMENT-BINDING PROTEIN 2C"/>
    <property type="match status" value="1"/>
</dbReference>
<dbReference type="PANTHER" id="PTHR31241:SF62">
    <property type="entry name" value="DEHYDRATION-RESPONSIVE ELEMENT-BINDING PROTEIN 2D"/>
    <property type="match status" value="1"/>
</dbReference>
<dbReference type="Pfam" id="PF00847">
    <property type="entry name" value="AP2"/>
    <property type="match status" value="1"/>
</dbReference>
<dbReference type="PRINTS" id="PR00367">
    <property type="entry name" value="ETHRSPELEMNT"/>
</dbReference>
<dbReference type="SMART" id="SM00380">
    <property type="entry name" value="AP2"/>
    <property type="match status" value="1"/>
</dbReference>
<dbReference type="SUPFAM" id="SSF54171">
    <property type="entry name" value="DNA-binding domain"/>
    <property type="match status" value="1"/>
</dbReference>
<dbReference type="PROSITE" id="PS51032">
    <property type="entry name" value="AP2_ERF"/>
    <property type="match status" value="1"/>
</dbReference>
<organism>
    <name type="scientific">Oryza sativa subsp. japonica</name>
    <name type="common">Rice</name>
    <dbReference type="NCBI Taxonomy" id="39947"/>
    <lineage>
        <taxon>Eukaryota</taxon>
        <taxon>Viridiplantae</taxon>
        <taxon>Streptophyta</taxon>
        <taxon>Embryophyta</taxon>
        <taxon>Tracheophyta</taxon>
        <taxon>Spermatophyta</taxon>
        <taxon>Magnoliopsida</taxon>
        <taxon>Liliopsida</taxon>
        <taxon>Poales</taxon>
        <taxon>Poaceae</taxon>
        <taxon>BOP clade</taxon>
        <taxon>Oryzoideae</taxon>
        <taxon>Oryzeae</taxon>
        <taxon>Oryzinae</taxon>
        <taxon>Oryza</taxon>
        <taxon>Oryza sativa</taxon>
    </lineage>
</organism>
<protein>
    <recommendedName>
        <fullName>Dehydration-responsive element-binding protein 2C</fullName>
        <shortName>OsDREB2C</shortName>
    </recommendedName>
</protein>
<proteinExistence type="evidence at transcript level"/>
<reference key="1">
    <citation type="submission" date="2003-07" db="EMBL/GenBank/DDBJ databases">
        <title>Oryza sativa japonica group Ap22 mRNA.</title>
        <authorList>
            <person name="Peng R."/>
            <person name="Yao Q."/>
            <person name="Xiong A."/>
        </authorList>
    </citation>
    <scope>NUCLEOTIDE SEQUENCE [MRNA]</scope>
</reference>
<reference key="2">
    <citation type="journal article" date="2005" name="Nature">
        <title>The map-based sequence of the rice genome.</title>
        <authorList>
            <consortium name="International rice genome sequencing project (IRGSP)"/>
        </authorList>
    </citation>
    <scope>NUCLEOTIDE SEQUENCE [LARGE SCALE GENOMIC DNA]</scope>
    <source>
        <strain>cv. Nipponbare</strain>
    </source>
</reference>
<reference key="3">
    <citation type="journal article" date="2008" name="Nucleic Acids Res.">
        <title>The rice annotation project database (RAP-DB): 2008 update.</title>
        <authorList>
            <consortium name="The rice annotation project (RAP)"/>
        </authorList>
    </citation>
    <scope>GENOME REANNOTATION</scope>
    <source>
        <strain>cv. Nipponbare</strain>
    </source>
</reference>
<reference key="4">
    <citation type="journal article" date="2013" name="Rice">
        <title>Improvement of the Oryza sativa Nipponbare reference genome using next generation sequence and optical map data.</title>
        <authorList>
            <person name="Kawahara Y."/>
            <person name="de la Bastide M."/>
            <person name="Hamilton J.P."/>
            <person name="Kanamori H."/>
            <person name="McCombie W.R."/>
            <person name="Ouyang S."/>
            <person name="Schwartz D.C."/>
            <person name="Tanaka T."/>
            <person name="Wu J."/>
            <person name="Zhou S."/>
            <person name="Childs K.L."/>
            <person name="Davidson R.M."/>
            <person name="Lin H."/>
            <person name="Quesada-Ocampo L."/>
            <person name="Vaillancourt B."/>
            <person name="Sakai H."/>
            <person name="Lee S.S."/>
            <person name="Kim J."/>
            <person name="Numa H."/>
            <person name="Itoh T."/>
            <person name="Buell C.R."/>
            <person name="Matsumoto T."/>
        </authorList>
    </citation>
    <scope>GENOME REANNOTATION</scope>
    <source>
        <strain>cv. Nipponbare</strain>
    </source>
</reference>
<reference key="5">
    <citation type="journal article" date="2003" name="Science">
        <title>Collection, mapping, and annotation of over 28,000 cDNA clones from japonica rice.</title>
        <authorList>
            <consortium name="The rice full-length cDNA consortium"/>
        </authorList>
    </citation>
    <scope>NUCLEOTIDE SEQUENCE [LARGE SCALE MRNA]</scope>
    <source>
        <strain>cv. Nipponbare</strain>
    </source>
</reference>
<reference key="6">
    <citation type="journal article" date="2010" name="Mol. Genet. Genomics">
        <title>Comprehensive analysis of rice DREB2-type genes that encode transcription factors involved in the expression of abiotic stress-responsive genes.</title>
        <authorList>
            <person name="Matsukura S."/>
            <person name="Mizoi J."/>
            <person name="Yoshida T."/>
            <person name="Todaka D."/>
            <person name="Ito Y."/>
            <person name="Maruyama K."/>
            <person name="Shinozaki K."/>
            <person name="Yamaguchi-Shinozaki K."/>
        </authorList>
    </citation>
    <scope>SUBCELLULAR LOCATION</scope>
    <scope>INDUCTION</scope>
</reference>
<accession>Q84ZA1</accession>
<accession>A0A0P0XJJ2</accession>
<evidence type="ECO:0000250" key="1"/>
<evidence type="ECO:0000255" key="2">
    <source>
        <dbReference type="PROSITE-ProRule" id="PRU00366"/>
    </source>
</evidence>
<evidence type="ECO:0000256" key="3">
    <source>
        <dbReference type="SAM" id="MobiDB-lite"/>
    </source>
</evidence>
<evidence type="ECO:0000269" key="4">
    <source>
    </source>
</evidence>
<evidence type="ECO:0000305" key="5"/>
<name>DRE2C_ORYSJ</name>
<gene>
    <name type="primary">DREB2C</name>
    <name type="synonym">AP22</name>
    <name type="synonym">ERF44</name>
    <name type="ordered locus">Os08g0565200</name>
    <name type="ordered locus">LOC_Os08g45110</name>
    <name type="ORF">OSJNBa0044E16.12</name>
    <name type="ORF">P0705A05.128</name>
</gene>
<sequence>MEMDIGEGESCCGRRKQQQQQNISSSKSRKCCPLRRSRKGCMKGKGGPENQRCPFRGVRQRTWGKWVAEIREPNRGARLWLGTFNTALDAARAYDSAARALYGDCARLNLLLAAATAGAPPAAATPSVATPCSTNDDSNNSSSTTHQQQLTTMLQLDDDNYTLQPSSSDQEDFETYVTRLPKAEDFGLEGFQEVPLDVLDEAGGGISIWDLSICPADFMATAATTTAKSS</sequence>
<feature type="chain" id="PRO_0000397869" description="Dehydration-responsive element-binding protein 2C">
    <location>
        <begin position="1"/>
        <end position="230"/>
    </location>
</feature>
<feature type="DNA-binding region" description="AP2/ERF" evidence="2">
    <location>
        <begin position="54"/>
        <end position="111"/>
    </location>
</feature>
<feature type="region of interest" description="Disordered" evidence="3">
    <location>
        <begin position="1"/>
        <end position="31"/>
    </location>
</feature>
<feature type="region of interest" description="Disordered" evidence="3">
    <location>
        <begin position="122"/>
        <end position="149"/>
    </location>
</feature>